<accession>A4J7I9</accession>
<name>OBG_DESRM</name>
<protein>
    <recommendedName>
        <fullName evidence="1">GTPase Obg</fullName>
        <ecNumber evidence="1">3.6.5.-</ecNumber>
    </recommendedName>
    <alternativeName>
        <fullName evidence="1">GTP-binding protein Obg</fullName>
    </alternativeName>
</protein>
<reference key="1">
    <citation type="submission" date="2007-03" db="EMBL/GenBank/DDBJ databases">
        <title>Complete sequence of Desulfotomaculum reducens MI-1.</title>
        <authorList>
            <consortium name="US DOE Joint Genome Institute"/>
            <person name="Copeland A."/>
            <person name="Lucas S."/>
            <person name="Lapidus A."/>
            <person name="Barry K."/>
            <person name="Detter J.C."/>
            <person name="Glavina del Rio T."/>
            <person name="Hammon N."/>
            <person name="Israni S."/>
            <person name="Dalin E."/>
            <person name="Tice H."/>
            <person name="Pitluck S."/>
            <person name="Sims D."/>
            <person name="Brettin T."/>
            <person name="Bruce D."/>
            <person name="Han C."/>
            <person name="Tapia R."/>
            <person name="Schmutz J."/>
            <person name="Larimer F."/>
            <person name="Land M."/>
            <person name="Hauser L."/>
            <person name="Kyrpides N."/>
            <person name="Kim E."/>
            <person name="Tebo B.M."/>
            <person name="Richardson P."/>
        </authorList>
    </citation>
    <scope>NUCLEOTIDE SEQUENCE [LARGE SCALE GENOMIC DNA]</scope>
    <source>
        <strain>ATCC BAA-1160 / DSM 100696 / MI-1</strain>
    </source>
</reference>
<dbReference type="EC" id="3.6.5.-" evidence="1"/>
<dbReference type="EMBL" id="CP000612">
    <property type="protein sequence ID" value="ABO51042.1"/>
    <property type="molecule type" value="Genomic_DNA"/>
</dbReference>
<dbReference type="RefSeq" id="WP_011878840.1">
    <property type="nucleotide sequence ID" value="NC_009253.1"/>
</dbReference>
<dbReference type="SMR" id="A4J7I9"/>
<dbReference type="STRING" id="349161.Dred_2532"/>
<dbReference type="KEGG" id="drm:Dred_2532"/>
<dbReference type="eggNOG" id="COG0536">
    <property type="taxonomic scope" value="Bacteria"/>
</dbReference>
<dbReference type="HOGENOM" id="CLU_011747_2_1_9"/>
<dbReference type="OrthoDB" id="9807318at2"/>
<dbReference type="Proteomes" id="UP000001556">
    <property type="component" value="Chromosome"/>
</dbReference>
<dbReference type="GO" id="GO:0005737">
    <property type="term" value="C:cytoplasm"/>
    <property type="evidence" value="ECO:0007669"/>
    <property type="project" value="UniProtKB-SubCell"/>
</dbReference>
<dbReference type="GO" id="GO:0005525">
    <property type="term" value="F:GTP binding"/>
    <property type="evidence" value="ECO:0007669"/>
    <property type="project" value="UniProtKB-UniRule"/>
</dbReference>
<dbReference type="GO" id="GO:0003924">
    <property type="term" value="F:GTPase activity"/>
    <property type="evidence" value="ECO:0007669"/>
    <property type="project" value="UniProtKB-UniRule"/>
</dbReference>
<dbReference type="GO" id="GO:0000287">
    <property type="term" value="F:magnesium ion binding"/>
    <property type="evidence" value="ECO:0007669"/>
    <property type="project" value="InterPro"/>
</dbReference>
<dbReference type="GO" id="GO:0042254">
    <property type="term" value="P:ribosome biogenesis"/>
    <property type="evidence" value="ECO:0007669"/>
    <property type="project" value="UniProtKB-UniRule"/>
</dbReference>
<dbReference type="CDD" id="cd01898">
    <property type="entry name" value="Obg"/>
    <property type="match status" value="1"/>
</dbReference>
<dbReference type="FunFam" id="2.70.210.12:FF:000001">
    <property type="entry name" value="GTPase Obg"/>
    <property type="match status" value="1"/>
</dbReference>
<dbReference type="Gene3D" id="3.30.300.350">
    <property type="entry name" value="GTP-binding protein OBG, C-terminal domain"/>
    <property type="match status" value="1"/>
</dbReference>
<dbReference type="Gene3D" id="2.70.210.12">
    <property type="entry name" value="GTP1/OBG domain"/>
    <property type="match status" value="1"/>
</dbReference>
<dbReference type="Gene3D" id="3.40.50.300">
    <property type="entry name" value="P-loop containing nucleotide triphosphate hydrolases"/>
    <property type="match status" value="1"/>
</dbReference>
<dbReference type="HAMAP" id="MF_01454">
    <property type="entry name" value="GTPase_Obg"/>
    <property type="match status" value="1"/>
</dbReference>
<dbReference type="InterPro" id="IPR031167">
    <property type="entry name" value="G_OBG"/>
</dbReference>
<dbReference type="InterPro" id="IPR006073">
    <property type="entry name" value="GTP-bd"/>
</dbReference>
<dbReference type="InterPro" id="IPR014100">
    <property type="entry name" value="GTP-bd_Obg/CgtA"/>
</dbReference>
<dbReference type="InterPro" id="IPR036346">
    <property type="entry name" value="GTP-bd_prot_GTP1/OBG_C_sf"/>
</dbReference>
<dbReference type="InterPro" id="IPR006074">
    <property type="entry name" value="GTP1-OBG_CS"/>
</dbReference>
<dbReference type="InterPro" id="IPR006169">
    <property type="entry name" value="GTP1_OBG_dom"/>
</dbReference>
<dbReference type="InterPro" id="IPR036726">
    <property type="entry name" value="GTP1_OBG_dom_sf"/>
</dbReference>
<dbReference type="InterPro" id="IPR045086">
    <property type="entry name" value="OBG_GTPase"/>
</dbReference>
<dbReference type="InterPro" id="IPR015349">
    <property type="entry name" value="OCT_dom"/>
</dbReference>
<dbReference type="InterPro" id="IPR027417">
    <property type="entry name" value="P-loop_NTPase"/>
</dbReference>
<dbReference type="NCBIfam" id="TIGR02729">
    <property type="entry name" value="Obg_CgtA"/>
    <property type="match status" value="1"/>
</dbReference>
<dbReference type="NCBIfam" id="TIGR03595">
    <property type="entry name" value="Obg_CgtA_exten"/>
    <property type="match status" value="1"/>
</dbReference>
<dbReference type="NCBIfam" id="NF008954">
    <property type="entry name" value="PRK12296.1"/>
    <property type="match status" value="1"/>
</dbReference>
<dbReference type="NCBIfam" id="NF008955">
    <property type="entry name" value="PRK12297.1"/>
    <property type="match status" value="1"/>
</dbReference>
<dbReference type="NCBIfam" id="NF008956">
    <property type="entry name" value="PRK12299.1"/>
    <property type="match status" value="1"/>
</dbReference>
<dbReference type="PANTHER" id="PTHR11702">
    <property type="entry name" value="DEVELOPMENTALLY REGULATED GTP-BINDING PROTEIN-RELATED"/>
    <property type="match status" value="1"/>
</dbReference>
<dbReference type="PANTHER" id="PTHR11702:SF31">
    <property type="entry name" value="MITOCHONDRIAL RIBOSOME-ASSOCIATED GTPASE 2"/>
    <property type="match status" value="1"/>
</dbReference>
<dbReference type="Pfam" id="PF09269">
    <property type="entry name" value="DUF1967"/>
    <property type="match status" value="1"/>
</dbReference>
<dbReference type="Pfam" id="PF01018">
    <property type="entry name" value="GTP1_OBG"/>
    <property type="match status" value="1"/>
</dbReference>
<dbReference type="Pfam" id="PF01926">
    <property type="entry name" value="MMR_HSR1"/>
    <property type="match status" value="1"/>
</dbReference>
<dbReference type="PIRSF" id="PIRSF002401">
    <property type="entry name" value="GTP_bd_Obg/CgtA"/>
    <property type="match status" value="1"/>
</dbReference>
<dbReference type="PRINTS" id="PR00326">
    <property type="entry name" value="GTP1OBG"/>
</dbReference>
<dbReference type="SUPFAM" id="SSF102741">
    <property type="entry name" value="Obg GTP-binding protein C-terminal domain"/>
    <property type="match status" value="1"/>
</dbReference>
<dbReference type="SUPFAM" id="SSF82051">
    <property type="entry name" value="Obg GTP-binding protein N-terminal domain"/>
    <property type="match status" value="1"/>
</dbReference>
<dbReference type="SUPFAM" id="SSF52540">
    <property type="entry name" value="P-loop containing nucleoside triphosphate hydrolases"/>
    <property type="match status" value="1"/>
</dbReference>
<dbReference type="PROSITE" id="PS51710">
    <property type="entry name" value="G_OBG"/>
    <property type="match status" value="1"/>
</dbReference>
<dbReference type="PROSITE" id="PS00905">
    <property type="entry name" value="GTP1_OBG"/>
    <property type="match status" value="1"/>
</dbReference>
<dbReference type="PROSITE" id="PS51883">
    <property type="entry name" value="OBG"/>
    <property type="match status" value="1"/>
</dbReference>
<dbReference type="PROSITE" id="PS51881">
    <property type="entry name" value="OCT"/>
    <property type="match status" value="1"/>
</dbReference>
<keyword id="KW-0963">Cytoplasm</keyword>
<keyword id="KW-0342">GTP-binding</keyword>
<keyword id="KW-0378">Hydrolase</keyword>
<keyword id="KW-0460">Magnesium</keyword>
<keyword id="KW-0479">Metal-binding</keyword>
<keyword id="KW-0547">Nucleotide-binding</keyword>
<keyword id="KW-1185">Reference proteome</keyword>
<evidence type="ECO:0000255" key="1">
    <source>
        <dbReference type="HAMAP-Rule" id="MF_01454"/>
    </source>
</evidence>
<evidence type="ECO:0000255" key="2">
    <source>
        <dbReference type="PROSITE-ProRule" id="PRU01229"/>
    </source>
</evidence>
<evidence type="ECO:0000255" key="3">
    <source>
        <dbReference type="PROSITE-ProRule" id="PRU01231"/>
    </source>
</evidence>
<proteinExistence type="inferred from homology"/>
<feature type="chain" id="PRO_0000385888" description="GTPase Obg">
    <location>
        <begin position="1"/>
        <end position="422"/>
    </location>
</feature>
<feature type="domain" description="Obg" evidence="3">
    <location>
        <begin position="1"/>
        <end position="158"/>
    </location>
</feature>
<feature type="domain" description="OBG-type G" evidence="1">
    <location>
        <begin position="159"/>
        <end position="330"/>
    </location>
</feature>
<feature type="domain" description="OCT" evidence="2">
    <location>
        <begin position="344"/>
        <end position="422"/>
    </location>
</feature>
<feature type="binding site" evidence="1">
    <location>
        <begin position="165"/>
        <end position="172"/>
    </location>
    <ligand>
        <name>GTP</name>
        <dbReference type="ChEBI" id="CHEBI:37565"/>
    </ligand>
</feature>
<feature type="binding site" evidence="1">
    <location>
        <position position="172"/>
    </location>
    <ligand>
        <name>Mg(2+)</name>
        <dbReference type="ChEBI" id="CHEBI:18420"/>
    </ligand>
</feature>
<feature type="binding site" evidence="1">
    <location>
        <begin position="190"/>
        <end position="194"/>
    </location>
    <ligand>
        <name>GTP</name>
        <dbReference type="ChEBI" id="CHEBI:37565"/>
    </ligand>
</feature>
<feature type="binding site" evidence="1">
    <location>
        <position position="192"/>
    </location>
    <ligand>
        <name>Mg(2+)</name>
        <dbReference type="ChEBI" id="CHEBI:18420"/>
    </ligand>
</feature>
<feature type="binding site" evidence="1">
    <location>
        <begin position="212"/>
        <end position="215"/>
    </location>
    <ligand>
        <name>GTP</name>
        <dbReference type="ChEBI" id="CHEBI:37565"/>
    </ligand>
</feature>
<feature type="binding site" evidence="1">
    <location>
        <begin position="282"/>
        <end position="285"/>
    </location>
    <ligand>
        <name>GTP</name>
        <dbReference type="ChEBI" id="CHEBI:37565"/>
    </ligand>
</feature>
<feature type="binding site" evidence="1">
    <location>
        <begin position="311"/>
        <end position="313"/>
    </location>
    <ligand>
        <name>GTP</name>
        <dbReference type="ChEBI" id="CHEBI:37565"/>
    </ligand>
</feature>
<organism>
    <name type="scientific">Desulforamulus reducens (strain ATCC BAA-1160 / DSM 100696 / MI-1)</name>
    <name type="common">Desulfotomaculum reducens</name>
    <dbReference type="NCBI Taxonomy" id="349161"/>
    <lineage>
        <taxon>Bacteria</taxon>
        <taxon>Bacillati</taxon>
        <taxon>Bacillota</taxon>
        <taxon>Clostridia</taxon>
        <taxon>Eubacteriales</taxon>
        <taxon>Peptococcaceae</taxon>
        <taxon>Desulforamulus</taxon>
    </lineage>
</organism>
<sequence>MFYDRAKIYVKGGDGGNGCIAMRREKYVPFGGPWGGDGGHGGDVTFIADEGLNTLQDFRYKKHFKAERGGHGMGKNMNGPAGEDLLVKVPTGTVVREAETGRLIADLLENGQQVVIAKGGRGGRGNVHFASSSNKAPRIAEKGEPGEELWLELELKVIADVGLIGFPNAGKSTFISMVSAAKPKIADYPFTTLVPNLGVVSAGEEGSFVLADIPGLVEGASQGVGLGHEFLRHTERTRLLIHVVDTAGTEGRDPVEDIKIINRELELYDPRLSTRPQIIAANKMDIIPLAEENLARLREEFGEQFEIYPISAATNQGLDKVIHRVAELLAQLPKIEPEQPEEDVMFEPEERFNIKRDIDGNWRVTGKEIERHVAMTYLEEDQSLERLQRIMKMMGLENGLVEAGVKVGDIVRIGDWEFEWSE</sequence>
<gene>
    <name evidence="1" type="primary">obg</name>
    <name type="ordered locus">Dred_2532</name>
</gene>
<comment type="function">
    <text evidence="1">An essential GTPase which binds GTP, GDP and possibly (p)ppGpp with moderate affinity, with high nucleotide exchange rates and a fairly low GTP hydrolysis rate. Plays a role in control of the cell cycle, stress response, ribosome biogenesis and in those bacteria that undergo differentiation, in morphogenesis control.</text>
</comment>
<comment type="cofactor">
    <cofactor evidence="1">
        <name>Mg(2+)</name>
        <dbReference type="ChEBI" id="CHEBI:18420"/>
    </cofactor>
</comment>
<comment type="subunit">
    <text evidence="1">Monomer.</text>
</comment>
<comment type="subcellular location">
    <subcellularLocation>
        <location evidence="1">Cytoplasm</location>
    </subcellularLocation>
</comment>
<comment type="similarity">
    <text evidence="1">Belongs to the TRAFAC class OBG-HflX-like GTPase superfamily. OBG GTPase family.</text>
</comment>